<gene>
    <name evidence="1" type="primary">rpsB</name>
    <name type="ordered locus">DR_1513</name>
</gene>
<name>RS2_DEIRA</name>
<proteinExistence type="inferred from homology"/>
<accession>Q9RU79</accession>
<organism>
    <name type="scientific">Deinococcus radiodurans (strain ATCC 13939 / DSM 20539 / JCM 16871 / CCUG 27074 / LMG 4051 / NBRC 15346 / NCIMB 9279 / VKM B-1422 / R1)</name>
    <dbReference type="NCBI Taxonomy" id="243230"/>
    <lineage>
        <taxon>Bacteria</taxon>
        <taxon>Thermotogati</taxon>
        <taxon>Deinococcota</taxon>
        <taxon>Deinococci</taxon>
        <taxon>Deinococcales</taxon>
        <taxon>Deinococcaceae</taxon>
        <taxon>Deinococcus</taxon>
    </lineage>
</organism>
<evidence type="ECO:0000255" key="1">
    <source>
        <dbReference type="HAMAP-Rule" id="MF_00291"/>
    </source>
</evidence>
<evidence type="ECO:0000256" key="2">
    <source>
        <dbReference type="SAM" id="MobiDB-lite"/>
    </source>
</evidence>
<evidence type="ECO:0000305" key="3"/>
<comment type="similarity">
    <text evidence="1">Belongs to the universal ribosomal protein uS2 family.</text>
</comment>
<reference key="1">
    <citation type="journal article" date="1999" name="Science">
        <title>Genome sequence of the radioresistant bacterium Deinococcus radiodurans R1.</title>
        <authorList>
            <person name="White O."/>
            <person name="Eisen J.A."/>
            <person name="Heidelberg J.F."/>
            <person name="Hickey E.K."/>
            <person name="Peterson J.D."/>
            <person name="Dodson R.J."/>
            <person name="Haft D.H."/>
            <person name="Gwinn M.L."/>
            <person name="Nelson W.C."/>
            <person name="Richardson D.L."/>
            <person name="Moffat K.S."/>
            <person name="Qin H."/>
            <person name="Jiang L."/>
            <person name="Pamphile W."/>
            <person name="Crosby M."/>
            <person name="Shen M."/>
            <person name="Vamathevan J.J."/>
            <person name="Lam P."/>
            <person name="McDonald L.A."/>
            <person name="Utterback T.R."/>
            <person name="Zalewski C."/>
            <person name="Makarova K.S."/>
            <person name="Aravind L."/>
            <person name="Daly M.J."/>
            <person name="Minton K.W."/>
            <person name="Fleischmann R.D."/>
            <person name="Ketchum K.A."/>
            <person name="Nelson K.E."/>
            <person name="Salzberg S.L."/>
            <person name="Smith H.O."/>
            <person name="Venter J.C."/>
            <person name="Fraser C.M."/>
        </authorList>
    </citation>
    <scope>NUCLEOTIDE SEQUENCE [LARGE SCALE GENOMIC DNA]</scope>
    <source>
        <strain>ATCC 13939 / DSM 20539 / JCM 16871 / CCUG 27074 / LMG 4051 / NBRC 15346 / NCIMB 9279 / VKM B-1422 / R1</strain>
    </source>
</reference>
<keyword id="KW-1185">Reference proteome</keyword>
<keyword id="KW-0687">Ribonucleoprotein</keyword>
<keyword id="KW-0689">Ribosomal protein</keyword>
<sequence length="264" mass="29756">MSYISMKQLLEAGVHFGHETKRWNPKFKKFIFAERNGIFIIDLQKTLKQVDRSFDYIKDLAERGGVILFVGTKKQAQEIVELEARRTGMPYVTSRWLGGMLTNFKTMRTRIDRLNELDDLFESERINDRPKAERIQLASERERLLRFVGGIRKMNRLPDAIFVVDPTKEVIAVQEANKLGIPVIALADTDSDPDVIDYIVPGNDDAIRSIQLITHRVGDLLVEARGGHEDVSAGPVEEQSDEAQAAEQGTEGDTAQLTSSQGRS</sequence>
<protein>
    <recommendedName>
        <fullName evidence="1">Small ribosomal subunit protein uS2</fullName>
    </recommendedName>
    <alternativeName>
        <fullName evidence="3">30S ribosomal protein S2</fullName>
    </alternativeName>
</protein>
<dbReference type="EMBL" id="AE000513">
    <property type="protein sequence ID" value="AAF11080.1"/>
    <property type="molecule type" value="Genomic_DNA"/>
</dbReference>
<dbReference type="PIR" id="F75386">
    <property type="entry name" value="F75386"/>
</dbReference>
<dbReference type="RefSeq" id="NP_295236.1">
    <property type="nucleotide sequence ID" value="NC_001263.1"/>
</dbReference>
<dbReference type="RefSeq" id="WP_010888152.1">
    <property type="nucleotide sequence ID" value="NC_001263.1"/>
</dbReference>
<dbReference type="SMR" id="Q9RU79"/>
<dbReference type="FunCoup" id="Q9RU79">
    <property type="interactions" value="467"/>
</dbReference>
<dbReference type="STRING" id="243230.DR_1513"/>
<dbReference type="PaxDb" id="243230-DR_1513"/>
<dbReference type="EnsemblBacteria" id="AAF11080">
    <property type="protein sequence ID" value="AAF11080"/>
    <property type="gene ID" value="DR_1513"/>
</dbReference>
<dbReference type="GeneID" id="69517752"/>
<dbReference type="KEGG" id="dra:DR_1513"/>
<dbReference type="PATRIC" id="fig|243230.17.peg.1716"/>
<dbReference type="eggNOG" id="COG0052">
    <property type="taxonomic scope" value="Bacteria"/>
</dbReference>
<dbReference type="HOGENOM" id="CLU_040318_2_3_0"/>
<dbReference type="InParanoid" id="Q9RU79"/>
<dbReference type="OrthoDB" id="9808036at2"/>
<dbReference type="Proteomes" id="UP000002524">
    <property type="component" value="Chromosome 1"/>
</dbReference>
<dbReference type="GO" id="GO:0022627">
    <property type="term" value="C:cytosolic small ribosomal subunit"/>
    <property type="evidence" value="ECO:0000318"/>
    <property type="project" value="GO_Central"/>
</dbReference>
<dbReference type="GO" id="GO:0003735">
    <property type="term" value="F:structural constituent of ribosome"/>
    <property type="evidence" value="ECO:0000318"/>
    <property type="project" value="GO_Central"/>
</dbReference>
<dbReference type="GO" id="GO:0006412">
    <property type="term" value="P:translation"/>
    <property type="evidence" value="ECO:0007669"/>
    <property type="project" value="UniProtKB-UniRule"/>
</dbReference>
<dbReference type="CDD" id="cd01425">
    <property type="entry name" value="RPS2"/>
    <property type="match status" value="1"/>
</dbReference>
<dbReference type="FunFam" id="1.10.287.610:FF:000001">
    <property type="entry name" value="30S ribosomal protein S2"/>
    <property type="match status" value="1"/>
</dbReference>
<dbReference type="Gene3D" id="3.40.50.10490">
    <property type="entry name" value="Glucose-6-phosphate isomerase like protein, domain 1"/>
    <property type="match status" value="1"/>
</dbReference>
<dbReference type="Gene3D" id="1.10.287.610">
    <property type="entry name" value="Helix hairpin bin"/>
    <property type="match status" value="1"/>
</dbReference>
<dbReference type="HAMAP" id="MF_00291_B">
    <property type="entry name" value="Ribosomal_uS2_B"/>
    <property type="match status" value="1"/>
</dbReference>
<dbReference type="InterPro" id="IPR001865">
    <property type="entry name" value="Ribosomal_uS2"/>
</dbReference>
<dbReference type="InterPro" id="IPR005706">
    <property type="entry name" value="Ribosomal_uS2_bac/mit/plastid"/>
</dbReference>
<dbReference type="InterPro" id="IPR018130">
    <property type="entry name" value="Ribosomal_uS2_CS"/>
</dbReference>
<dbReference type="InterPro" id="IPR023591">
    <property type="entry name" value="Ribosomal_uS2_flav_dom_sf"/>
</dbReference>
<dbReference type="NCBIfam" id="TIGR01011">
    <property type="entry name" value="rpsB_bact"/>
    <property type="match status" value="1"/>
</dbReference>
<dbReference type="PANTHER" id="PTHR12534">
    <property type="entry name" value="30S RIBOSOMAL PROTEIN S2 PROKARYOTIC AND ORGANELLAR"/>
    <property type="match status" value="1"/>
</dbReference>
<dbReference type="PANTHER" id="PTHR12534:SF0">
    <property type="entry name" value="SMALL RIBOSOMAL SUBUNIT PROTEIN US2M"/>
    <property type="match status" value="1"/>
</dbReference>
<dbReference type="Pfam" id="PF00318">
    <property type="entry name" value="Ribosomal_S2"/>
    <property type="match status" value="1"/>
</dbReference>
<dbReference type="PRINTS" id="PR00395">
    <property type="entry name" value="RIBOSOMALS2"/>
</dbReference>
<dbReference type="SUPFAM" id="SSF52313">
    <property type="entry name" value="Ribosomal protein S2"/>
    <property type="match status" value="1"/>
</dbReference>
<dbReference type="PROSITE" id="PS00962">
    <property type="entry name" value="RIBOSOMAL_S2_1"/>
    <property type="match status" value="1"/>
</dbReference>
<dbReference type="PROSITE" id="PS00963">
    <property type="entry name" value="RIBOSOMAL_S2_2"/>
    <property type="match status" value="1"/>
</dbReference>
<feature type="chain" id="PRO_0000134163" description="Small ribosomal subunit protein uS2">
    <location>
        <begin position="1"/>
        <end position="264"/>
    </location>
</feature>
<feature type="region of interest" description="Disordered" evidence="2">
    <location>
        <begin position="228"/>
        <end position="264"/>
    </location>
</feature>
<feature type="compositionally biased region" description="Polar residues" evidence="2">
    <location>
        <begin position="251"/>
        <end position="264"/>
    </location>
</feature>